<organism>
    <name type="scientific">Drosophila ananassae</name>
    <name type="common">Fruit fly</name>
    <dbReference type="NCBI Taxonomy" id="7217"/>
    <lineage>
        <taxon>Eukaryota</taxon>
        <taxon>Metazoa</taxon>
        <taxon>Ecdysozoa</taxon>
        <taxon>Arthropoda</taxon>
        <taxon>Hexapoda</taxon>
        <taxon>Insecta</taxon>
        <taxon>Pterygota</taxon>
        <taxon>Neoptera</taxon>
        <taxon>Endopterygota</taxon>
        <taxon>Diptera</taxon>
        <taxon>Brachycera</taxon>
        <taxon>Muscomorpha</taxon>
        <taxon>Ephydroidea</taxon>
        <taxon>Drosophilidae</taxon>
        <taxon>Drosophila</taxon>
        <taxon>Sophophora</taxon>
    </lineage>
</organism>
<sequence length="886" mass="100297">MSAAKEGKEKKPVATVVKIVEVESVSPSKDKRPTRMKLLNNLSASSPQTYPPKTDKRSGIKGSRIKILNEDVLVAPKVEKRRSTKPTSPGATATSTVKILNEKRIVPAEETALETTKIKISPPKRNKMDHYVLQPVKVENNKSASQATRGATGEDEDTIAFILGDDDEVVPASTSRSNGQEILVTEEEEEEEEDDLDEEGDSPGGSNKNSGHKAIKEIVEHVCGKCYKTFRRLMSLKKHLEFCRYDSGYHLRKAECWKNLEKIEKDGDVLEKKDICFCCCESYDTFHLGHINCPDCPKSFKTQTSYERHIFITHSEFSDYPCSICNANLRSEALLKLHEEQHKSRGKPYACKICGKDFTRSYHLKRHQKYSSCSANENDTMSCKVCDRVFYRLDNLRSHLKHHLGTQVVKKPEYMCHVCKNCFYSLSTLNIHIRTHTGEKPFDCDLCDKKLSALVALKKHRRYHTGEKPYSCTVCNQAFAVKEVLNRHMKRHTGERPHKCEECGKSFIQATQLRTHSKTHIRPFACDMCEEKFKTEKQLERHVKEHSRQKRPYFSCTECKRHFRNTAQLKQHMDAGDHSEKSGEKPQRAKRSSTKVLERTDCAICDKNFDSSETLRKHIRSVHECDPDDIFGIQPPSAKRAKINKIPKVDEEEEEEMVPVALNASSGSLISSQTDDNGVVVREFLVDEGDGTAQTITLENETYTILPLDGEIAAEQITDEGVKVEGQKTPPKKSPVVKKEKRKSLGASLAAAIADNIEVPPVEEDFEGEVLTEEDLKLKENIAKLIDMLADPPILKKYGWPNAPEEMVLCKVIENCGYDLNKGAENYAELDYGSRMREYCKLLFTVVIHNDSIKSLLNNFPIDDVIEYVLGDEDQDEDGADNGEGN</sequence>
<comment type="function">
    <text evidence="1">Component of the gypsy chromatin insulator complex which is required for the function of the gypsy chromatin insulator and other endogenous chromatin insulators. Chromatin insulators are regulatory elements which establish independent domains of transcriptional activity within eukaryotic genomes. Insulators have two defining properties; they can block the communication between an enhancer and a promoter when placed between them and can also buffer transgenes from position effect variegation (PEV). Insulators are proposed to structure the chromatin fiber into independent domains of differing transcriptional potential by promoting the formation of distinct chromatin loops. This chromatin looping may involve the formation of insulator bodies, where homotypic interactions between individual subunits of the insulator complex could promote the clustering of widely spaced insulators at the nuclear periphery. Within the gypsy insulator complex, this protein binds specifically to a region of the gypsy element located 3' of the 5' long terminal repeat (LTR), and may also mediate interaction with other endogenous insulators at sites distinct from those recognized by Cp190. Cooperates with pita and cliff to recruit Cp190 and regulate insulator function at the front-ultraabdominal (Fub) boundary.</text>
</comment>
<comment type="subcellular location">
    <subcellularLocation>
        <location>Nucleus</location>
    </subcellularLocation>
</comment>
<gene>
    <name type="primary">su(Hw)</name>
</gene>
<keyword id="KW-0238">DNA-binding</keyword>
<keyword id="KW-0479">Metal-binding</keyword>
<keyword id="KW-0539">Nucleus</keyword>
<keyword id="KW-0677">Repeat</keyword>
<keyword id="KW-0804">Transcription</keyword>
<keyword id="KW-0805">Transcription regulation</keyword>
<keyword id="KW-0862">Zinc</keyword>
<keyword id="KW-0863">Zinc-finger</keyword>
<feature type="chain" id="PRO_0000047052" description="Protein suppressor of hairy wing">
    <location>
        <begin position="1"/>
        <end position="886"/>
    </location>
</feature>
<feature type="zinc finger region" description="C2H2-type 1; atypical" evidence="2">
    <location>
        <begin position="221"/>
        <end position="243"/>
    </location>
</feature>
<feature type="zinc finger region" description="C2H2-type 2" evidence="2">
    <location>
        <begin position="291"/>
        <end position="314"/>
    </location>
</feature>
<feature type="zinc finger region" description="C2H2-type 3; atypical" evidence="2">
    <location>
        <begin position="320"/>
        <end position="342"/>
    </location>
</feature>
<feature type="zinc finger region" description="C2H2-type 4" evidence="2">
    <location>
        <begin position="349"/>
        <end position="367"/>
    </location>
</feature>
<feature type="zinc finger region" description="C2H2-type 5" evidence="2">
    <location>
        <begin position="381"/>
        <end position="403"/>
    </location>
</feature>
<feature type="zinc finger region" description="C2H2-type 6" evidence="2">
    <location>
        <begin position="414"/>
        <end position="436"/>
    </location>
</feature>
<feature type="zinc finger region" description="C2H2-type 7" evidence="2">
    <location>
        <begin position="442"/>
        <end position="464"/>
    </location>
</feature>
<feature type="zinc finger region" description="C2H2-type 8" evidence="2">
    <location>
        <begin position="470"/>
        <end position="492"/>
    </location>
</feature>
<feature type="zinc finger region" description="C2H2-type 9" evidence="2">
    <location>
        <begin position="498"/>
        <end position="520"/>
    </location>
</feature>
<feature type="zinc finger region" description="C2H2-type 10" evidence="2">
    <location>
        <begin position="524"/>
        <end position="546"/>
    </location>
</feature>
<feature type="zinc finger region" description="C2H2-type 11" evidence="2">
    <location>
        <begin position="554"/>
        <end position="578"/>
    </location>
</feature>
<feature type="zinc finger region" description="C2H2-type 12" evidence="2">
    <location>
        <begin position="600"/>
        <end position="623"/>
    </location>
</feature>
<feature type="region of interest" description="Disordered" evidence="3">
    <location>
        <begin position="24"/>
        <end position="62"/>
    </location>
</feature>
<feature type="region of interest" description="Disordered" evidence="3">
    <location>
        <begin position="167"/>
        <end position="211"/>
    </location>
</feature>
<feature type="region of interest" description="Disordered" evidence="3">
    <location>
        <begin position="571"/>
        <end position="594"/>
    </location>
</feature>
<feature type="compositionally biased region" description="Acidic residues" evidence="3">
    <location>
        <begin position="184"/>
        <end position="201"/>
    </location>
</feature>
<feature type="compositionally biased region" description="Basic and acidic residues" evidence="3">
    <location>
        <begin position="571"/>
        <end position="587"/>
    </location>
</feature>
<accession>Q08875</accession>
<evidence type="ECO:0000250" key="1">
    <source>
        <dbReference type="UniProtKB" id="P08970"/>
    </source>
</evidence>
<evidence type="ECO:0000255" key="2">
    <source>
        <dbReference type="PROSITE-ProRule" id="PRU00042"/>
    </source>
</evidence>
<evidence type="ECO:0000256" key="3">
    <source>
        <dbReference type="SAM" id="MobiDB-lite"/>
    </source>
</evidence>
<proteinExistence type="evidence at transcript level"/>
<name>SUHW_DROAN</name>
<reference key="1">
    <citation type="journal article" date="1993" name="Genes Dev.">
        <title>A leucine zipper domain of the suppressor of Hairy-wing protein mediates its repressive effect on enhancer function.</title>
        <authorList>
            <person name="Harrison D.A."/>
            <person name="Gdula D.A."/>
            <person name="Coyne R.S."/>
            <person name="Corces V.G."/>
        </authorList>
    </citation>
    <scope>NUCLEOTIDE SEQUENCE [MRNA]</scope>
</reference>
<protein>
    <recommendedName>
        <fullName>Protein suppressor of hairy wing</fullName>
    </recommendedName>
</protein>
<dbReference type="EMBL" id="Z25519">
    <property type="protein sequence ID" value="CAA80975.1"/>
    <property type="molecule type" value="mRNA"/>
</dbReference>
<dbReference type="PIR" id="A48586">
    <property type="entry name" value="A48586"/>
</dbReference>
<dbReference type="SMR" id="Q08875"/>
<dbReference type="eggNOG" id="KOG1721">
    <property type="taxonomic scope" value="Eukaryota"/>
</dbReference>
<dbReference type="OrthoDB" id="654211at2759"/>
<dbReference type="ChiTaRS" id="su(Hw)">
    <property type="organism name" value="fly"/>
</dbReference>
<dbReference type="GO" id="GO:0005634">
    <property type="term" value="C:nucleus"/>
    <property type="evidence" value="ECO:0007669"/>
    <property type="project" value="UniProtKB-SubCell"/>
</dbReference>
<dbReference type="GO" id="GO:0000981">
    <property type="term" value="F:DNA-binding transcription factor activity, RNA polymerase II-specific"/>
    <property type="evidence" value="ECO:0007669"/>
    <property type="project" value="TreeGrafter"/>
</dbReference>
<dbReference type="GO" id="GO:0000977">
    <property type="term" value="F:RNA polymerase II transcription regulatory region sequence-specific DNA binding"/>
    <property type="evidence" value="ECO:0007669"/>
    <property type="project" value="TreeGrafter"/>
</dbReference>
<dbReference type="GO" id="GO:0008270">
    <property type="term" value="F:zinc ion binding"/>
    <property type="evidence" value="ECO:0007669"/>
    <property type="project" value="UniProtKB-KW"/>
</dbReference>
<dbReference type="FunFam" id="3.30.160.60:FF:000322">
    <property type="entry name" value="GDNF-inducible zinc finger protein 1"/>
    <property type="match status" value="1"/>
</dbReference>
<dbReference type="FunFam" id="3.30.160.60:FF:002689">
    <property type="entry name" value="Protein suppressor of hairy wing"/>
    <property type="match status" value="1"/>
</dbReference>
<dbReference type="FunFam" id="3.30.160.60:FF:000204">
    <property type="entry name" value="Zinc finger protein 331"/>
    <property type="match status" value="1"/>
</dbReference>
<dbReference type="FunFam" id="3.30.160.60:FF:000618">
    <property type="entry name" value="zinc finger protein 341 isoform X1"/>
    <property type="match status" value="1"/>
</dbReference>
<dbReference type="FunFam" id="3.30.160.60:FF:000495">
    <property type="entry name" value="zinc finger protein 668"/>
    <property type="match status" value="1"/>
</dbReference>
<dbReference type="Gene3D" id="3.30.160.60">
    <property type="entry name" value="Classic Zinc Finger"/>
    <property type="match status" value="8"/>
</dbReference>
<dbReference type="InterPro" id="IPR036236">
    <property type="entry name" value="Znf_C2H2_sf"/>
</dbReference>
<dbReference type="InterPro" id="IPR013087">
    <property type="entry name" value="Znf_C2H2_type"/>
</dbReference>
<dbReference type="PANTHER" id="PTHR24381:SF393">
    <property type="entry name" value="CHROMATIN-LINKED ADAPTOR FOR MSL PROTEINS, ISOFORM B"/>
    <property type="match status" value="1"/>
</dbReference>
<dbReference type="PANTHER" id="PTHR24381">
    <property type="entry name" value="ZINC FINGER PROTEIN"/>
    <property type="match status" value="1"/>
</dbReference>
<dbReference type="Pfam" id="PF00096">
    <property type="entry name" value="zf-C2H2"/>
    <property type="match status" value="8"/>
</dbReference>
<dbReference type="Pfam" id="PF13912">
    <property type="entry name" value="zf-C2H2_6"/>
    <property type="match status" value="1"/>
</dbReference>
<dbReference type="SMART" id="SM00355">
    <property type="entry name" value="ZnF_C2H2"/>
    <property type="match status" value="12"/>
</dbReference>
<dbReference type="SUPFAM" id="SSF57667">
    <property type="entry name" value="beta-beta-alpha zinc fingers"/>
    <property type="match status" value="5"/>
</dbReference>
<dbReference type="PROSITE" id="PS00028">
    <property type="entry name" value="ZINC_FINGER_C2H2_1"/>
    <property type="match status" value="10"/>
</dbReference>
<dbReference type="PROSITE" id="PS50157">
    <property type="entry name" value="ZINC_FINGER_C2H2_2"/>
    <property type="match status" value="10"/>
</dbReference>